<protein>
    <recommendedName>
        <fullName evidence="1">Small ribosomal subunit protein uS4</fullName>
    </recommendedName>
    <alternativeName>
        <fullName evidence="3">30S ribosomal protein S4</fullName>
    </alternativeName>
</protein>
<keyword id="KW-1185">Reference proteome</keyword>
<keyword id="KW-0687">Ribonucleoprotein</keyword>
<keyword id="KW-0689">Ribosomal protein</keyword>
<keyword id="KW-0694">RNA-binding</keyword>
<keyword id="KW-0699">rRNA-binding</keyword>
<proteinExistence type="inferred from homology"/>
<gene>
    <name evidence="1" type="primary">rpsD</name>
    <name type="ordered locus">Xaut_4095</name>
</gene>
<comment type="function">
    <text evidence="1">One of the primary rRNA binding proteins, it binds directly to 16S rRNA where it nucleates assembly of the body of the 30S subunit.</text>
</comment>
<comment type="function">
    <text evidence="1">With S5 and S12 plays an important role in translational accuracy.</text>
</comment>
<comment type="subunit">
    <text evidence="1">Part of the 30S ribosomal subunit. Contacts protein S5. The interaction surface between S4 and S5 is involved in control of translational fidelity.</text>
</comment>
<comment type="similarity">
    <text evidence="1">Belongs to the universal ribosomal protein uS4 family.</text>
</comment>
<sequence>MSKRIAAKHKIDRRMGENIWGRSKSPVNRREYGPGQHGQRRKGKLSDFGVQLRAKQKLKGYYGSIGEKQFHKVYVEASRLKGDTGANLIGLLERRLDAVVYRAKFVPTIFAARQFVSHGHVKVNGQRVNIPSYLVKVGDVVEVKEASRQMTLVLEAQQLGERDVPDYIELDAGKLAARFARIPELNEVPYPVQMEPNLVVEFYSR</sequence>
<name>RS4_XANP2</name>
<organism>
    <name type="scientific">Xanthobacter autotrophicus (strain ATCC BAA-1158 / Py2)</name>
    <dbReference type="NCBI Taxonomy" id="78245"/>
    <lineage>
        <taxon>Bacteria</taxon>
        <taxon>Pseudomonadati</taxon>
        <taxon>Pseudomonadota</taxon>
        <taxon>Alphaproteobacteria</taxon>
        <taxon>Hyphomicrobiales</taxon>
        <taxon>Xanthobacteraceae</taxon>
        <taxon>Xanthobacter</taxon>
    </lineage>
</organism>
<evidence type="ECO:0000255" key="1">
    <source>
        <dbReference type="HAMAP-Rule" id="MF_01306"/>
    </source>
</evidence>
<evidence type="ECO:0000256" key="2">
    <source>
        <dbReference type="SAM" id="MobiDB-lite"/>
    </source>
</evidence>
<evidence type="ECO:0000305" key="3"/>
<accession>A7IMS4</accession>
<reference key="1">
    <citation type="submission" date="2007-07" db="EMBL/GenBank/DDBJ databases">
        <title>Complete sequence of chromosome of Xanthobacter autotrophicus Py2.</title>
        <authorList>
            <consortium name="US DOE Joint Genome Institute"/>
            <person name="Copeland A."/>
            <person name="Lucas S."/>
            <person name="Lapidus A."/>
            <person name="Barry K."/>
            <person name="Glavina del Rio T."/>
            <person name="Hammon N."/>
            <person name="Israni S."/>
            <person name="Dalin E."/>
            <person name="Tice H."/>
            <person name="Pitluck S."/>
            <person name="Sims D."/>
            <person name="Brettin T."/>
            <person name="Bruce D."/>
            <person name="Detter J.C."/>
            <person name="Han C."/>
            <person name="Tapia R."/>
            <person name="Brainard J."/>
            <person name="Schmutz J."/>
            <person name="Larimer F."/>
            <person name="Land M."/>
            <person name="Hauser L."/>
            <person name="Kyrpides N."/>
            <person name="Kim E."/>
            <person name="Ensigns S.A."/>
            <person name="Richardson P."/>
        </authorList>
    </citation>
    <scope>NUCLEOTIDE SEQUENCE [LARGE SCALE GENOMIC DNA]</scope>
    <source>
        <strain>ATCC BAA-1158 / Py2</strain>
    </source>
</reference>
<feature type="chain" id="PRO_1000140819" description="Small ribosomal subunit protein uS4">
    <location>
        <begin position="1"/>
        <end position="205"/>
    </location>
</feature>
<feature type="domain" description="S4 RNA-binding" evidence="1">
    <location>
        <begin position="94"/>
        <end position="157"/>
    </location>
</feature>
<feature type="region of interest" description="Disordered" evidence="2">
    <location>
        <begin position="18"/>
        <end position="46"/>
    </location>
</feature>
<dbReference type="EMBL" id="CP000781">
    <property type="protein sequence ID" value="ABS69317.1"/>
    <property type="molecule type" value="Genomic_DNA"/>
</dbReference>
<dbReference type="SMR" id="A7IMS4"/>
<dbReference type="STRING" id="78245.Xaut_4095"/>
<dbReference type="KEGG" id="xau:Xaut_4095"/>
<dbReference type="eggNOG" id="COG0522">
    <property type="taxonomic scope" value="Bacteria"/>
</dbReference>
<dbReference type="HOGENOM" id="CLU_092403_0_0_5"/>
<dbReference type="OrthoDB" id="9803672at2"/>
<dbReference type="PhylomeDB" id="A7IMS4"/>
<dbReference type="Proteomes" id="UP000002417">
    <property type="component" value="Chromosome"/>
</dbReference>
<dbReference type="GO" id="GO:0015935">
    <property type="term" value="C:small ribosomal subunit"/>
    <property type="evidence" value="ECO:0007669"/>
    <property type="project" value="InterPro"/>
</dbReference>
<dbReference type="GO" id="GO:0019843">
    <property type="term" value="F:rRNA binding"/>
    <property type="evidence" value="ECO:0007669"/>
    <property type="project" value="UniProtKB-UniRule"/>
</dbReference>
<dbReference type="GO" id="GO:0003735">
    <property type="term" value="F:structural constituent of ribosome"/>
    <property type="evidence" value="ECO:0007669"/>
    <property type="project" value="InterPro"/>
</dbReference>
<dbReference type="GO" id="GO:0042274">
    <property type="term" value="P:ribosomal small subunit biogenesis"/>
    <property type="evidence" value="ECO:0007669"/>
    <property type="project" value="TreeGrafter"/>
</dbReference>
<dbReference type="GO" id="GO:0006412">
    <property type="term" value="P:translation"/>
    <property type="evidence" value="ECO:0007669"/>
    <property type="project" value="UniProtKB-UniRule"/>
</dbReference>
<dbReference type="CDD" id="cd00165">
    <property type="entry name" value="S4"/>
    <property type="match status" value="1"/>
</dbReference>
<dbReference type="FunFam" id="3.10.290.10:FF:000001">
    <property type="entry name" value="30S ribosomal protein S4"/>
    <property type="match status" value="1"/>
</dbReference>
<dbReference type="Gene3D" id="1.10.1050.10">
    <property type="entry name" value="Ribosomal Protein S4 Delta 41, Chain A, domain 1"/>
    <property type="match status" value="1"/>
</dbReference>
<dbReference type="Gene3D" id="3.10.290.10">
    <property type="entry name" value="RNA-binding S4 domain"/>
    <property type="match status" value="1"/>
</dbReference>
<dbReference type="HAMAP" id="MF_01306_B">
    <property type="entry name" value="Ribosomal_uS4_B"/>
    <property type="match status" value="1"/>
</dbReference>
<dbReference type="InterPro" id="IPR022801">
    <property type="entry name" value="Ribosomal_uS4"/>
</dbReference>
<dbReference type="InterPro" id="IPR005709">
    <property type="entry name" value="Ribosomal_uS4_bac-type"/>
</dbReference>
<dbReference type="InterPro" id="IPR018079">
    <property type="entry name" value="Ribosomal_uS4_CS"/>
</dbReference>
<dbReference type="InterPro" id="IPR001912">
    <property type="entry name" value="Ribosomal_uS4_N"/>
</dbReference>
<dbReference type="InterPro" id="IPR002942">
    <property type="entry name" value="S4_RNA-bd"/>
</dbReference>
<dbReference type="InterPro" id="IPR036986">
    <property type="entry name" value="S4_RNA-bd_sf"/>
</dbReference>
<dbReference type="NCBIfam" id="NF003717">
    <property type="entry name" value="PRK05327.1"/>
    <property type="match status" value="1"/>
</dbReference>
<dbReference type="NCBIfam" id="TIGR01017">
    <property type="entry name" value="rpsD_bact"/>
    <property type="match status" value="1"/>
</dbReference>
<dbReference type="PANTHER" id="PTHR11831">
    <property type="entry name" value="30S 40S RIBOSOMAL PROTEIN"/>
    <property type="match status" value="1"/>
</dbReference>
<dbReference type="PANTHER" id="PTHR11831:SF4">
    <property type="entry name" value="SMALL RIBOSOMAL SUBUNIT PROTEIN US4M"/>
    <property type="match status" value="1"/>
</dbReference>
<dbReference type="Pfam" id="PF00163">
    <property type="entry name" value="Ribosomal_S4"/>
    <property type="match status" value="1"/>
</dbReference>
<dbReference type="Pfam" id="PF01479">
    <property type="entry name" value="S4"/>
    <property type="match status" value="1"/>
</dbReference>
<dbReference type="SMART" id="SM01390">
    <property type="entry name" value="Ribosomal_S4"/>
    <property type="match status" value="1"/>
</dbReference>
<dbReference type="SMART" id="SM00363">
    <property type="entry name" value="S4"/>
    <property type="match status" value="1"/>
</dbReference>
<dbReference type="SUPFAM" id="SSF55174">
    <property type="entry name" value="Alpha-L RNA-binding motif"/>
    <property type="match status" value="1"/>
</dbReference>
<dbReference type="PROSITE" id="PS00632">
    <property type="entry name" value="RIBOSOMAL_S4"/>
    <property type="match status" value="1"/>
</dbReference>
<dbReference type="PROSITE" id="PS50889">
    <property type="entry name" value="S4"/>
    <property type="match status" value="1"/>
</dbReference>